<sequence length="312" mass="35218">MEKHQYRDLQLIGQGSFGSVFRAQDVESSKIVALKVVDLDATKDQIETLTQEINFLIDLNSVHITKYYASFVDGFRLWITMEYCDGGSCLDLLKLSGTFSERVIAEVMRQVLEALVYLHGQGKMHRDIKAANILTMKDGLVKLADFGVSGQLESLRDKNDDFVGTPFWMAPEVVKQTGYNYKADIWSLGITAYELATGEPPYSGIHPMKVLLLIPKHSPPSLERSKFSRAFCDFVSNCLKKNPKDRATAEYLSKHKFIKKYCPNTSVKEVVASYAKWKESELLPEATPYNSTMGNSANTIDEVVWDFGTVRR</sequence>
<accession>O14047</accession>
<keyword id="KW-0067">ATP-binding</keyword>
<keyword id="KW-0963">Cytoplasm</keyword>
<keyword id="KW-0418">Kinase</keyword>
<keyword id="KW-0547">Nucleotide-binding</keyword>
<keyword id="KW-0539">Nucleus</keyword>
<keyword id="KW-1185">Reference proteome</keyword>
<keyword id="KW-0723">Serine/threonine-protein kinase</keyword>
<keyword id="KW-0808">Transferase</keyword>
<reference key="1">
    <citation type="journal article" date="2002" name="Nature">
        <title>The genome sequence of Schizosaccharomyces pombe.</title>
        <authorList>
            <person name="Wood V."/>
            <person name="Gwilliam R."/>
            <person name="Rajandream M.A."/>
            <person name="Lyne M.H."/>
            <person name="Lyne R."/>
            <person name="Stewart A."/>
            <person name="Sgouros J.G."/>
            <person name="Peat N."/>
            <person name="Hayles J."/>
            <person name="Baker S.G."/>
            <person name="Basham D."/>
            <person name="Bowman S."/>
            <person name="Brooks K."/>
            <person name="Brown D."/>
            <person name="Brown S."/>
            <person name="Chillingworth T."/>
            <person name="Churcher C.M."/>
            <person name="Collins M."/>
            <person name="Connor R."/>
            <person name="Cronin A."/>
            <person name="Davis P."/>
            <person name="Feltwell T."/>
            <person name="Fraser A."/>
            <person name="Gentles S."/>
            <person name="Goble A."/>
            <person name="Hamlin N."/>
            <person name="Harris D.E."/>
            <person name="Hidalgo J."/>
            <person name="Hodgson G."/>
            <person name="Holroyd S."/>
            <person name="Hornsby T."/>
            <person name="Howarth S."/>
            <person name="Huckle E.J."/>
            <person name="Hunt S."/>
            <person name="Jagels K."/>
            <person name="James K.D."/>
            <person name="Jones L."/>
            <person name="Jones M."/>
            <person name="Leather S."/>
            <person name="McDonald S."/>
            <person name="McLean J."/>
            <person name="Mooney P."/>
            <person name="Moule S."/>
            <person name="Mungall K.L."/>
            <person name="Murphy L.D."/>
            <person name="Niblett D."/>
            <person name="Odell C."/>
            <person name="Oliver K."/>
            <person name="O'Neil S."/>
            <person name="Pearson D."/>
            <person name="Quail M.A."/>
            <person name="Rabbinowitsch E."/>
            <person name="Rutherford K.M."/>
            <person name="Rutter S."/>
            <person name="Saunders D."/>
            <person name="Seeger K."/>
            <person name="Sharp S."/>
            <person name="Skelton J."/>
            <person name="Simmonds M.N."/>
            <person name="Squares R."/>
            <person name="Squares S."/>
            <person name="Stevens K."/>
            <person name="Taylor K."/>
            <person name="Taylor R.G."/>
            <person name="Tivey A."/>
            <person name="Walsh S.V."/>
            <person name="Warren T."/>
            <person name="Whitehead S."/>
            <person name="Woodward J.R."/>
            <person name="Volckaert G."/>
            <person name="Aert R."/>
            <person name="Robben J."/>
            <person name="Grymonprez B."/>
            <person name="Weltjens I."/>
            <person name="Vanstreels E."/>
            <person name="Rieger M."/>
            <person name="Schaefer M."/>
            <person name="Mueller-Auer S."/>
            <person name="Gabel C."/>
            <person name="Fuchs M."/>
            <person name="Duesterhoeft A."/>
            <person name="Fritzc C."/>
            <person name="Holzer E."/>
            <person name="Moestl D."/>
            <person name="Hilbert H."/>
            <person name="Borzym K."/>
            <person name="Langer I."/>
            <person name="Beck A."/>
            <person name="Lehrach H."/>
            <person name="Reinhardt R."/>
            <person name="Pohl T.M."/>
            <person name="Eger P."/>
            <person name="Zimmermann W."/>
            <person name="Wedler H."/>
            <person name="Wambutt R."/>
            <person name="Purnelle B."/>
            <person name="Goffeau A."/>
            <person name="Cadieu E."/>
            <person name="Dreano S."/>
            <person name="Gloux S."/>
            <person name="Lelaure V."/>
            <person name="Mottier S."/>
            <person name="Galibert F."/>
            <person name="Aves S.J."/>
            <person name="Xiang Z."/>
            <person name="Hunt C."/>
            <person name="Moore K."/>
            <person name="Hurst S.M."/>
            <person name="Lucas M."/>
            <person name="Rochet M."/>
            <person name="Gaillardin C."/>
            <person name="Tallada V.A."/>
            <person name="Garzon A."/>
            <person name="Thode G."/>
            <person name="Daga R.R."/>
            <person name="Cruzado L."/>
            <person name="Jimenez J."/>
            <person name="Sanchez M."/>
            <person name="del Rey F."/>
            <person name="Benito J."/>
            <person name="Dominguez A."/>
            <person name="Revuelta J.L."/>
            <person name="Moreno S."/>
            <person name="Armstrong J."/>
            <person name="Forsburg S.L."/>
            <person name="Cerutti L."/>
            <person name="Lowe T."/>
            <person name="McCombie W.R."/>
            <person name="Paulsen I."/>
            <person name="Potashkin J."/>
            <person name="Shpakovski G.V."/>
            <person name="Ussery D."/>
            <person name="Barrell B.G."/>
            <person name="Nurse P."/>
        </authorList>
    </citation>
    <scope>NUCLEOTIDE SEQUENCE [LARGE SCALE GENOMIC DNA]</scope>
    <source>
        <strain>972 / ATCC 24843</strain>
    </source>
</reference>
<reference key="2">
    <citation type="journal article" date="2005" name="Eukaryot. Cell">
        <title>Systematic deletion analysis of fission yeast protein kinases.</title>
        <authorList>
            <person name="Bimbo A."/>
            <person name="Jia Y."/>
            <person name="Poh S.L."/>
            <person name="Karuturi R.K.M."/>
            <person name="den Elzen N."/>
            <person name="Peng X."/>
            <person name="Zheng L."/>
            <person name="O'Connell M."/>
            <person name="Liu E.T."/>
            <person name="Balasubramanian M.K."/>
            <person name="Liu J."/>
        </authorList>
    </citation>
    <scope>IDENTIFICATION</scope>
</reference>
<reference key="3">
    <citation type="journal article" date="2006" name="Nat. Biotechnol.">
        <title>ORFeome cloning and global analysis of protein localization in the fission yeast Schizosaccharomyces pombe.</title>
        <authorList>
            <person name="Matsuyama A."/>
            <person name="Arai R."/>
            <person name="Yashiroda Y."/>
            <person name="Shirai A."/>
            <person name="Kamata A."/>
            <person name="Sekido S."/>
            <person name="Kobayashi Y."/>
            <person name="Hashimoto A."/>
            <person name="Hamamoto M."/>
            <person name="Hiraoka Y."/>
            <person name="Horinouchi S."/>
            <person name="Yoshida M."/>
        </authorList>
    </citation>
    <scope>SUBCELLULAR LOCATION [LARGE SCALE ANALYSIS]</scope>
</reference>
<gene>
    <name type="primary">ppk11</name>
    <name type="ORF">SPAC2C4.14c</name>
</gene>
<name>PPK11_SCHPO</name>
<organism>
    <name type="scientific">Schizosaccharomyces pombe (strain 972 / ATCC 24843)</name>
    <name type="common">Fission yeast</name>
    <dbReference type="NCBI Taxonomy" id="284812"/>
    <lineage>
        <taxon>Eukaryota</taxon>
        <taxon>Fungi</taxon>
        <taxon>Dikarya</taxon>
        <taxon>Ascomycota</taxon>
        <taxon>Taphrinomycotina</taxon>
        <taxon>Schizosaccharomycetes</taxon>
        <taxon>Schizosaccharomycetales</taxon>
        <taxon>Schizosaccharomycetaceae</taxon>
        <taxon>Schizosaccharomyces</taxon>
    </lineage>
</organism>
<dbReference type="EC" id="2.7.11.1"/>
<dbReference type="EMBL" id="CU329670">
    <property type="protein sequence ID" value="CAB16374.1"/>
    <property type="molecule type" value="Genomic_DNA"/>
</dbReference>
<dbReference type="PIR" id="T38525">
    <property type="entry name" value="T38525"/>
</dbReference>
<dbReference type="RefSeq" id="NP_594517.1">
    <property type="nucleotide sequence ID" value="NM_001019946.2"/>
</dbReference>
<dbReference type="SMR" id="O14047"/>
<dbReference type="BioGRID" id="277975">
    <property type="interactions" value="21"/>
</dbReference>
<dbReference type="FunCoup" id="O14047">
    <property type="interactions" value="569"/>
</dbReference>
<dbReference type="STRING" id="284812.O14047"/>
<dbReference type="iPTMnet" id="O14047"/>
<dbReference type="PaxDb" id="4896-SPAC2C4.14c.1"/>
<dbReference type="EnsemblFungi" id="SPAC2C4.14c.1">
    <property type="protein sequence ID" value="SPAC2C4.14c.1:pep"/>
    <property type="gene ID" value="SPAC2C4.14c"/>
</dbReference>
<dbReference type="GeneID" id="2541473"/>
<dbReference type="KEGG" id="spo:2541473"/>
<dbReference type="PomBase" id="SPAC2C4.14c">
    <property type="gene designation" value="ppk11"/>
</dbReference>
<dbReference type="VEuPathDB" id="FungiDB:SPAC2C4.14c"/>
<dbReference type="eggNOG" id="KOG0201">
    <property type="taxonomic scope" value="Eukaryota"/>
</dbReference>
<dbReference type="HOGENOM" id="CLU_000288_63_23_1"/>
<dbReference type="InParanoid" id="O14047"/>
<dbReference type="OMA" id="ACEPIKR"/>
<dbReference type="PhylomeDB" id="O14047"/>
<dbReference type="Reactome" id="R-SPO-75153">
    <property type="pathway name" value="Apoptotic execution phase"/>
</dbReference>
<dbReference type="PRO" id="PR:O14047"/>
<dbReference type="Proteomes" id="UP000002485">
    <property type="component" value="Chromosome I"/>
</dbReference>
<dbReference type="GO" id="GO:0032153">
    <property type="term" value="C:cell division site"/>
    <property type="evidence" value="ECO:0000314"/>
    <property type="project" value="PomBase"/>
</dbReference>
<dbReference type="GO" id="GO:0005737">
    <property type="term" value="C:cytoplasm"/>
    <property type="evidence" value="ECO:0000318"/>
    <property type="project" value="GO_Central"/>
</dbReference>
<dbReference type="GO" id="GO:0005829">
    <property type="term" value="C:cytosol"/>
    <property type="evidence" value="ECO:0007005"/>
    <property type="project" value="PomBase"/>
</dbReference>
<dbReference type="GO" id="GO:0000935">
    <property type="term" value="C:division septum"/>
    <property type="evidence" value="ECO:0000314"/>
    <property type="project" value="PomBase"/>
</dbReference>
<dbReference type="GO" id="GO:0005634">
    <property type="term" value="C:nucleus"/>
    <property type="evidence" value="ECO:0007005"/>
    <property type="project" value="PomBase"/>
</dbReference>
<dbReference type="GO" id="GO:0005524">
    <property type="term" value="F:ATP binding"/>
    <property type="evidence" value="ECO:0000255"/>
    <property type="project" value="PomBase"/>
</dbReference>
<dbReference type="GO" id="GO:0106310">
    <property type="term" value="F:protein serine kinase activity"/>
    <property type="evidence" value="ECO:0007669"/>
    <property type="project" value="RHEA"/>
</dbReference>
<dbReference type="GO" id="GO:0004674">
    <property type="term" value="F:protein serine/threonine kinase activity"/>
    <property type="evidence" value="ECO:0000318"/>
    <property type="project" value="GO_Central"/>
</dbReference>
<dbReference type="GO" id="GO:0035556">
    <property type="term" value="P:intracellular signal transduction"/>
    <property type="evidence" value="ECO:0000318"/>
    <property type="project" value="GO_Central"/>
</dbReference>
<dbReference type="GO" id="GO:0072741">
    <property type="term" value="P:protein localization to cell division site"/>
    <property type="evidence" value="ECO:0000315"/>
    <property type="project" value="PomBase"/>
</dbReference>
<dbReference type="GO" id="GO:2000100">
    <property type="term" value="P:regulation of establishment or maintenance of bipolar cell polarity regulating cell shape"/>
    <property type="evidence" value="ECO:0000316"/>
    <property type="project" value="PomBase"/>
</dbReference>
<dbReference type="GO" id="GO:0000920">
    <property type="term" value="P:septum digestion after cytokinesis"/>
    <property type="evidence" value="ECO:0000316"/>
    <property type="project" value="PomBase"/>
</dbReference>
<dbReference type="CDD" id="cd06609">
    <property type="entry name" value="STKc_MST3_like"/>
    <property type="match status" value="1"/>
</dbReference>
<dbReference type="FunFam" id="1.10.510.10:FF:000837">
    <property type="entry name" value="STE family protein kinase"/>
    <property type="match status" value="1"/>
</dbReference>
<dbReference type="Gene3D" id="1.10.510.10">
    <property type="entry name" value="Transferase(Phosphotransferase) domain 1"/>
    <property type="match status" value="1"/>
</dbReference>
<dbReference type="InterPro" id="IPR011009">
    <property type="entry name" value="Kinase-like_dom_sf"/>
</dbReference>
<dbReference type="InterPro" id="IPR000719">
    <property type="entry name" value="Prot_kinase_dom"/>
</dbReference>
<dbReference type="InterPro" id="IPR017441">
    <property type="entry name" value="Protein_kinase_ATP_BS"/>
</dbReference>
<dbReference type="InterPro" id="IPR050629">
    <property type="entry name" value="STE20/SPS1-PAK"/>
</dbReference>
<dbReference type="PANTHER" id="PTHR48012:SF10">
    <property type="entry name" value="FI20177P1"/>
    <property type="match status" value="1"/>
</dbReference>
<dbReference type="PANTHER" id="PTHR48012">
    <property type="entry name" value="STERILE20-LIKE KINASE, ISOFORM B-RELATED"/>
    <property type="match status" value="1"/>
</dbReference>
<dbReference type="Pfam" id="PF00069">
    <property type="entry name" value="Pkinase"/>
    <property type="match status" value="1"/>
</dbReference>
<dbReference type="SMART" id="SM00220">
    <property type="entry name" value="S_TKc"/>
    <property type="match status" value="1"/>
</dbReference>
<dbReference type="SUPFAM" id="SSF56112">
    <property type="entry name" value="Protein kinase-like (PK-like)"/>
    <property type="match status" value="1"/>
</dbReference>
<dbReference type="PROSITE" id="PS00107">
    <property type="entry name" value="PROTEIN_KINASE_ATP"/>
    <property type="match status" value="1"/>
</dbReference>
<dbReference type="PROSITE" id="PS50011">
    <property type="entry name" value="PROTEIN_KINASE_DOM"/>
    <property type="match status" value="1"/>
</dbReference>
<feature type="chain" id="PRO_0000256817" description="Serine/threonine-protein kinase ppk11">
    <location>
        <begin position="1"/>
        <end position="312"/>
    </location>
</feature>
<feature type="domain" description="Protein kinase" evidence="1">
    <location>
        <begin position="6"/>
        <end position="258"/>
    </location>
</feature>
<feature type="active site" description="Proton acceptor" evidence="1">
    <location>
        <position position="127"/>
    </location>
</feature>
<feature type="binding site" evidence="1">
    <location>
        <begin position="12"/>
        <end position="20"/>
    </location>
    <ligand>
        <name>ATP</name>
        <dbReference type="ChEBI" id="CHEBI:30616"/>
    </ligand>
</feature>
<feature type="binding site" evidence="1">
    <location>
        <position position="35"/>
    </location>
    <ligand>
        <name>ATP</name>
        <dbReference type="ChEBI" id="CHEBI:30616"/>
    </ligand>
</feature>
<protein>
    <recommendedName>
        <fullName>Serine/threonine-protein kinase ppk11</fullName>
        <ecNumber>2.7.11.1</ecNumber>
    </recommendedName>
</protein>
<proteinExistence type="inferred from homology"/>
<comment type="catalytic activity">
    <reaction>
        <text>L-seryl-[protein] + ATP = O-phospho-L-seryl-[protein] + ADP + H(+)</text>
        <dbReference type="Rhea" id="RHEA:17989"/>
        <dbReference type="Rhea" id="RHEA-COMP:9863"/>
        <dbReference type="Rhea" id="RHEA-COMP:11604"/>
        <dbReference type="ChEBI" id="CHEBI:15378"/>
        <dbReference type="ChEBI" id="CHEBI:29999"/>
        <dbReference type="ChEBI" id="CHEBI:30616"/>
        <dbReference type="ChEBI" id="CHEBI:83421"/>
        <dbReference type="ChEBI" id="CHEBI:456216"/>
        <dbReference type="EC" id="2.7.11.1"/>
    </reaction>
</comment>
<comment type="catalytic activity">
    <reaction>
        <text>L-threonyl-[protein] + ATP = O-phospho-L-threonyl-[protein] + ADP + H(+)</text>
        <dbReference type="Rhea" id="RHEA:46608"/>
        <dbReference type="Rhea" id="RHEA-COMP:11060"/>
        <dbReference type="Rhea" id="RHEA-COMP:11605"/>
        <dbReference type="ChEBI" id="CHEBI:15378"/>
        <dbReference type="ChEBI" id="CHEBI:30013"/>
        <dbReference type="ChEBI" id="CHEBI:30616"/>
        <dbReference type="ChEBI" id="CHEBI:61977"/>
        <dbReference type="ChEBI" id="CHEBI:456216"/>
        <dbReference type="EC" id="2.7.11.1"/>
    </reaction>
</comment>
<comment type="subcellular location">
    <subcellularLocation>
        <location evidence="2">Cytoplasm</location>
    </subcellularLocation>
    <subcellularLocation>
        <location evidence="2">Nucleus</location>
    </subcellularLocation>
    <text>Located at the septum.</text>
</comment>
<comment type="similarity">
    <text evidence="1">Belongs to the protein kinase superfamily. Ser/Thr protein kinase family.</text>
</comment>
<evidence type="ECO:0000255" key="1">
    <source>
        <dbReference type="PROSITE-ProRule" id="PRU00159"/>
    </source>
</evidence>
<evidence type="ECO:0000269" key="2">
    <source>
    </source>
</evidence>